<proteinExistence type="inferred from homology"/>
<organism>
    <name type="scientific">Methanocaldococcus jannaschii (strain ATCC 43067 / DSM 2661 / JAL-1 / JCM 10045 / NBRC 100440)</name>
    <name type="common">Methanococcus jannaschii</name>
    <dbReference type="NCBI Taxonomy" id="243232"/>
    <lineage>
        <taxon>Archaea</taxon>
        <taxon>Methanobacteriati</taxon>
        <taxon>Methanobacteriota</taxon>
        <taxon>Methanomada group</taxon>
        <taxon>Methanococci</taxon>
        <taxon>Methanococcales</taxon>
        <taxon>Methanocaldococcaceae</taxon>
        <taxon>Methanocaldococcus</taxon>
    </lineage>
</organism>
<name>FLUC_METJA</name>
<evidence type="ECO:0000255" key="1">
    <source>
        <dbReference type="HAMAP-Rule" id="MF_00454"/>
    </source>
</evidence>
<protein>
    <recommendedName>
        <fullName evidence="1">Fluoride-specific ion channel FluC</fullName>
    </recommendedName>
</protein>
<keyword id="KW-1003">Cell membrane</keyword>
<keyword id="KW-0407">Ion channel</keyword>
<keyword id="KW-0406">Ion transport</keyword>
<keyword id="KW-0472">Membrane</keyword>
<keyword id="KW-0479">Metal-binding</keyword>
<keyword id="KW-1185">Reference proteome</keyword>
<keyword id="KW-0915">Sodium</keyword>
<keyword id="KW-0812">Transmembrane</keyword>
<keyword id="KW-1133">Transmembrane helix</keyword>
<keyword id="KW-0813">Transport</keyword>
<gene>
    <name evidence="1" type="primary">fluC</name>
    <name evidence="1" type="synonym">crcB</name>
    <name type="ordered locus">MJ1523</name>
</gene>
<reference key="1">
    <citation type="journal article" date="1996" name="Science">
        <title>Complete genome sequence of the methanogenic archaeon, Methanococcus jannaschii.</title>
        <authorList>
            <person name="Bult C.J."/>
            <person name="White O."/>
            <person name="Olsen G.J."/>
            <person name="Zhou L."/>
            <person name="Fleischmann R.D."/>
            <person name="Sutton G.G."/>
            <person name="Blake J.A."/>
            <person name="FitzGerald L.M."/>
            <person name="Clayton R.A."/>
            <person name="Gocayne J.D."/>
            <person name="Kerlavage A.R."/>
            <person name="Dougherty B.A."/>
            <person name="Tomb J.-F."/>
            <person name="Adams M.D."/>
            <person name="Reich C.I."/>
            <person name="Overbeek R."/>
            <person name="Kirkness E.F."/>
            <person name="Weinstock K.G."/>
            <person name="Merrick J.M."/>
            <person name="Glodek A."/>
            <person name="Scott J.L."/>
            <person name="Geoghagen N.S.M."/>
            <person name="Weidman J.F."/>
            <person name="Fuhrmann J.L."/>
            <person name="Nguyen D."/>
            <person name="Utterback T.R."/>
            <person name="Kelley J.M."/>
            <person name="Peterson J.D."/>
            <person name="Sadow P.W."/>
            <person name="Hanna M.C."/>
            <person name="Cotton M.D."/>
            <person name="Roberts K.M."/>
            <person name="Hurst M.A."/>
            <person name="Kaine B.P."/>
            <person name="Borodovsky M."/>
            <person name="Klenk H.-P."/>
            <person name="Fraser C.M."/>
            <person name="Smith H.O."/>
            <person name="Woese C.R."/>
            <person name="Venter J.C."/>
        </authorList>
    </citation>
    <scope>NUCLEOTIDE SEQUENCE [LARGE SCALE GENOMIC DNA]</scope>
    <source>
        <strain>ATCC 43067 / DSM 2661 / JAL-1 / JCM 10045 / NBRC 100440</strain>
    </source>
</reference>
<sequence length="124" mass="13534">MIRELLLIGVGGFFGAIFRYLISGIVPVKFGLPTGTLAVNLIGSFILGFLLYCSLFAPIPTEYKLFIGTGFCGALTTFSTFSYETFVLVDEGLLFKALLNILINVVGCLIMVYFGRVLALAIFR</sequence>
<accession>Q58918</accession>
<feature type="chain" id="PRO_0000110228" description="Fluoride-specific ion channel FluC">
    <location>
        <begin position="1"/>
        <end position="124"/>
    </location>
</feature>
<feature type="transmembrane region" description="Helical" evidence="1">
    <location>
        <begin position="6"/>
        <end position="26"/>
    </location>
</feature>
<feature type="transmembrane region" description="Helical" evidence="1">
    <location>
        <begin position="37"/>
        <end position="57"/>
    </location>
</feature>
<feature type="transmembrane region" description="Helical" evidence="1">
    <location>
        <begin position="69"/>
        <end position="89"/>
    </location>
</feature>
<feature type="transmembrane region" description="Helical" evidence="1">
    <location>
        <begin position="92"/>
        <end position="112"/>
    </location>
</feature>
<feature type="binding site" evidence="1">
    <location>
        <position position="73"/>
    </location>
    <ligand>
        <name>Na(+)</name>
        <dbReference type="ChEBI" id="CHEBI:29101"/>
        <note>structural</note>
    </ligand>
</feature>
<feature type="binding site" evidence="1">
    <location>
        <position position="76"/>
    </location>
    <ligand>
        <name>Na(+)</name>
        <dbReference type="ChEBI" id="CHEBI:29101"/>
        <note>structural</note>
    </ligand>
</feature>
<dbReference type="EMBL" id="L77117">
    <property type="protein sequence ID" value="AAB99542.1"/>
    <property type="molecule type" value="Genomic_DNA"/>
</dbReference>
<dbReference type="PIR" id="B64490">
    <property type="entry name" value="B64490"/>
</dbReference>
<dbReference type="RefSeq" id="WP_010871047.1">
    <property type="nucleotide sequence ID" value="NC_000909.1"/>
</dbReference>
<dbReference type="SMR" id="Q58918"/>
<dbReference type="FunCoup" id="Q58918">
    <property type="interactions" value="2"/>
</dbReference>
<dbReference type="STRING" id="243232.MJ_1523"/>
<dbReference type="PaxDb" id="243232-MJ_1523"/>
<dbReference type="EnsemblBacteria" id="AAB99542">
    <property type="protein sequence ID" value="AAB99542"/>
    <property type="gene ID" value="MJ_1523"/>
</dbReference>
<dbReference type="GeneID" id="1452431"/>
<dbReference type="KEGG" id="mja:MJ_1523"/>
<dbReference type="eggNOG" id="arCOG04701">
    <property type="taxonomic scope" value="Archaea"/>
</dbReference>
<dbReference type="HOGENOM" id="CLU_114342_3_0_2"/>
<dbReference type="InParanoid" id="Q58918"/>
<dbReference type="OrthoDB" id="253428at2157"/>
<dbReference type="PhylomeDB" id="Q58918"/>
<dbReference type="Proteomes" id="UP000000805">
    <property type="component" value="Chromosome"/>
</dbReference>
<dbReference type="GO" id="GO:0005886">
    <property type="term" value="C:plasma membrane"/>
    <property type="evidence" value="ECO:0000318"/>
    <property type="project" value="GO_Central"/>
</dbReference>
<dbReference type="GO" id="GO:0062054">
    <property type="term" value="F:fluoride channel activity"/>
    <property type="evidence" value="ECO:0007669"/>
    <property type="project" value="UniProtKB-UniRule"/>
</dbReference>
<dbReference type="GO" id="GO:1903425">
    <property type="term" value="F:fluoride transmembrane transporter activity"/>
    <property type="evidence" value="ECO:0000318"/>
    <property type="project" value="GO_Central"/>
</dbReference>
<dbReference type="GO" id="GO:0046872">
    <property type="term" value="F:metal ion binding"/>
    <property type="evidence" value="ECO:0007669"/>
    <property type="project" value="UniProtKB-KW"/>
</dbReference>
<dbReference type="GO" id="GO:0140114">
    <property type="term" value="P:cellular detoxification of fluoride"/>
    <property type="evidence" value="ECO:0007669"/>
    <property type="project" value="UniProtKB-UniRule"/>
</dbReference>
<dbReference type="GO" id="GO:1903424">
    <property type="term" value="P:fluoride transmembrane transport"/>
    <property type="evidence" value="ECO:0000318"/>
    <property type="project" value="GO_Central"/>
</dbReference>
<dbReference type="HAMAP" id="MF_00454">
    <property type="entry name" value="FluC"/>
    <property type="match status" value="1"/>
</dbReference>
<dbReference type="InterPro" id="IPR003691">
    <property type="entry name" value="FluC"/>
</dbReference>
<dbReference type="NCBIfam" id="TIGR00494">
    <property type="entry name" value="crcB"/>
    <property type="match status" value="1"/>
</dbReference>
<dbReference type="PANTHER" id="PTHR28259">
    <property type="entry name" value="FLUORIDE EXPORT PROTEIN 1-RELATED"/>
    <property type="match status" value="1"/>
</dbReference>
<dbReference type="PANTHER" id="PTHR28259:SF1">
    <property type="entry name" value="FLUORIDE EXPORT PROTEIN 1-RELATED"/>
    <property type="match status" value="1"/>
</dbReference>
<dbReference type="Pfam" id="PF02537">
    <property type="entry name" value="CRCB"/>
    <property type="match status" value="1"/>
</dbReference>
<comment type="function">
    <text evidence="1">Fluoride-specific ion channel. Important for reducing fluoride concentration in the cell, thus reducing its toxicity.</text>
</comment>
<comment type="catalytic activity">
    <reaction evidence="1">
        <text>fluoride(in) = fluoride(out)</text>
        <dbReference type="Rhea" id="RHEA:76159"/>
        <dbReference type="ChEBI" id="CHEBI:17051"/>
    </reaction>
    <physiologicalReaction direction="left-to-right" evidence="1">
        <dbReference type="Rhea" id="RHEA:76160"/>
    </physiologicalReaction>
</comment>
<comment type="activity regulation">
    <text evidence="1">Na(+) is not transported, but it plays an essential structural role and its presence is essential for fluoride channel function.</text>
</comment>
<comment type="subcellular location">
    <subcellularLocation>
        <location evidence="1">Cell membrane</location>
        <topology evidence="1">Multi-pass membrane protein</topology>
    </subcellularLocation>
</comment>
<comment type="similarity">
    <text evidence="1">Belongs to the fluoride channel Fluc/FEX (TC 1.A.43) family.</text>
</comment>